<comment type="function">
    <text evidence="1">Required for Yop secretion.</text>
</comment>
<comment type="subunit">
    <text evidence="1">Interacts with YscY.</text>
</comment>
<comment type="subcellular location">
    <subcellularLocation>
        <location>Secreted</location>
    </subcellularLocation>
    <text evidence="1">Secreted via the type III secretion system.</text>
</comment>
<comment type="domain">
    <text evidence="1">The region between residues 50 and 110, which contains the predicted coiled coil domain, is essential for interaction with YscY.</text>
</comment>
<comment type="miscellaneous">
    <text evidence="1">May possess both an mRNA signal and a syc-dependent signal capable of directing its export through the type III secretion system.</text>
</comment>
<protein>
    <recommendedName>
        <fullName>Yop proteins translocation protein X</fullName>
    </recommendedName>
</protein>
<sequence>MSRIITAPHIGIEKLSAISLEELSCGLPERYALPPDGHPVEPHLERLYPTAQSKRSLWDFASPGYTFHGLHRAQDYRRELDTLQSLLTTSQSSELQAAAALLKCQQDDDRLLQIILNLLHKV</sequence>
<feature type="chain" id="PRO_0000281779" description="Yop proteins translocation protein X">
    <location>
        <begin position="1"/>
        <end position="122"/>
    </location>
</feature>
<feature type="coiled-coil region" evidence="2">
    <location>
        <begin position="71"/>
        <end position="87"/>
    </location>
</feature>
<reference key="1">
    <citation type="journal article" date="2001" name="Infect. Immun.">
        <title>Complete DNA sequence of Yersinia enterocolitica serotype 0:8 low-calcium-response plasmid reveals a new virulence plasmid-associated replicon.</title>
        <authorList>
            <person name="Snellings N.J."/>
            <person name="Popek M."/>
            <person name="Lindler L.E."/>
        </authorList>
    </citation>
    <scope>NUCLEOTIDE SEQUENCE [GENOMIC DNA]</scope>
</reference>
<reference key="2">
    <citation type="journal article" date="2006" name="PLoS Genet.">
        <title>The complete genome sequence and comparative genome analysis of the high pathogenicity Yersinia enterocolitica strain 8081.</title>
        <authorList>
            <person name="Thomson N.R."/>
            <person name="Howard S."/>
            <person name="Wren B.W."/>
            <person name="Holden M.T.G."/>
            <person name="Crossman L."/>
            <person name="Challis G.L."/>
            <person name="Churcher C."/>
            <person name="Mungall K."/>
            <person name="Brooks K."/>
            <person name="Chillingworth T."/>
            <person name="Feltwell T."/>
            <person name="Abdellah Z."/>
            <person name="Hauser H."/>
            <person name="Jagels K."/>
            <person name="Maddison M."/>
            <person name="Moule S."/>
            <person name="Sanders M."/>
            <person name="Whitehead S."/>
            <person name="Quail M.A."/>
            <person name="Dougan G."/>
            <person name="Parkhill J."/>
            <person name="Prentice M.B."/>
        </authorList>
    </citation>
    <scope>NUCLEOTIDE SEQUENCE [LARGE SCALE GENOMIC DNA]</scope>
    <source>
        <strain>NCTC 13174 / 8081</strain>
    </source>
</reference>
<accession>A1JU78</accession>
<accession>O68696</accession>
<accession>P21208</accession>
<evidence type="ECO:0000250" key="1"/>
<evidence type="ECO:0000255" key="2"/>
<geneLocation type="plasmid">
    <name>pYVe8081</name>
</geneLocation>
<gene>
    <name type="primary">yscX</name>
    <name type="ordered locus">YEP0020</name>
</gene>
<organism>
    <name type="scientific">Yersinia enterocolitica serotype O:8 / biotype 1B (strain NCTC 13174 / 8081)</name>
    <dbReference type="NCBI Taxonomy" id="393305"/>
    <lineage>
        <taxon>Bacteria</taxon>
        <taxon>Pseudomonadati</taxon>
        <taxon>Pseudomonadota</taxon>
        <taxon>Gammaproteobacteria</taxon>
        <taxon>Enterobacterales</taxon>
        <taxon>Yersiniaceae</taxon>
        <taxon>Yersinia</taxon>
    </lineage>
</organism>
<keyword id="KW-0175">Coiled coil</keyword>
<keyword id="KW-0614">Plasmid</keyword>
<keyword id="KW-0964">Secreted</keyword>
<name>YSCX_YERE8</name>
<dbReference type="EMBL" id="AF336309">
    <property type="protein sequence ID" value="AAK69218.1"/>
    <property type="molecule type" value="Genomic_DNA"/>
</dbReference>
<dbReference type="EMBL" id="AM286416">
    <property type="protein sequence ID" value="CAL10044.1"/>
    <property type="molecule type" value="Genomic_DNA"/>
</dbReference>
<dbReference type="RefSeq" id="NP_783670.1">
    <property type="nucleotide sequence ID" value="NC_004564.1"/>
</dbReference>
<dbReference type="RefSeq" id="NP_863519.1">
    <property type="nucleotide sequence ID" value="NC_005017.1"/>
</dbReference>
<dbReference type="RefSeq" id="WP_002212969.1">
    <property type="nucleotide sequence ID" value="NC_008791.1"/>
</dbReference>
<dbReference type="RefSeq" id="YP_001004074.1">
    <property type="nucleotide sequence ID" value="NC_008791.1"/>
</dbReference>
<dbReference type="SMR" id="A1JU78"/>
<dbReference type="KEGG" id="yen:YEP0020"/>
<dbReference type="PATRIC" id="fig|393305.7.peg.23"/>
<dbReference type="eggNOG" id="ENOG5032YR9">
    <property type="taxonomic scope" value="Bacteria"/>
</dbReference>
<dbReference type="HOGENOM" id="CLU_2033138_0_0_6"/>
<dbReference type="OrthoDB" id="6916027at2"/>
<dbReference type="PRO" id="PR:A1JU78"/>
<dbReference type="Proteomes" id="UP000000642">
    <property type="component" value="Plasmid pYVe8081"/>
</dbReference>
<dbReference type="GO" id="GO:0005576">
    <property type="term" value="C:extracellular region"/>
    <property type="evidence" value="ECO:0007669"/>
    <property type="project" value="UniProtKB-SubCell"/>
</dbReference>
<dbReference type="InterPro" id="IPR012672">
    <property type="entry name" value="T3SS_YscX"/>
</dbReference>
<dbReference type="NCBIfam" id="TIGR02502">
    <property type="entry name" value="type_III_YscX"/>
    <property type="match status" value="1"/>
</dbReference>
<dbReference type="Pfam" id="PF09474">
    <property type="entry name" value="Type_III_YscX"/>
    <property type="match status" value="1"/>
</dbReference>
<proteinExistence type="inferred from homology"/>